<dbReference type="EC" id="6.3.2.4" evidence="2"/>
<dbReference type="EMBL" id="CP000140">
    <property type="protein sequence ID" value="ABR44394.1"/>
    <property type="molecule type" value="Genomic_DNA"/>
</dbReference>
<dbReference type="RefSeq" id="WP_005861031.1">
    <property type="nucleotide sequence ID" value="NC_009615.1"/>
</dbReference>
<dbReference type="SMR" id="A6LFD0"/>
<dbReference type="STRING" id="435591.BDI_2675"/>
<dbReference type="PaxDb" id="435591-BDI_2675"/>
<dbReference type="KEGG" id="pdi:BDI_2675"/>
<dbReference type="eggNOG" id="COG1181">
    <property type="taxonomic scope" value="Bacteria"/>
</dbReference>
<dbReference type="HOGENOM" id="CLU_039268_1_1_10"/>
<dbReference type="BioCyc" id="PDIS435591:G1G5A-2749-MONOMER"/>
<dbReference type="UniPathway" id="UPA00219"/>
<dbReference type="Proteomes" id="UP000000566">
    <property type="component" value="Chromosome"/>
</dbReference>
<dbReference type="GO" id="GO:0005737">
    <property type="term" value="C:cytoplasm"/>
    <property type="evidence" value="ECO:0007669"/>
    <property type="project" value="UniProtKB-SubCell"/>
</dbReference>
<dbReference type="GO" id="GO:0005524">
    <property type="term" value="F:ATP binding"/>
    <property type="evidence" value="ECO:0007669"/>
    <property type="project" value="UniProtKB-KW"/>
</dbReference>
<dbReference type="GO" id="GO:0008716">
    <property type="term" value="F:D-alanine-D-alanine ligase activity"/>
    <property type="evidence" value="ECO:0007669"/>
    <property type="project" value="UniProtKB-UniRule"/>
</dbReference>
<dbReference type="GO" id="GO:0046872">
    <property type="term" value="F:metal ion binding"/>
    <property type="evidence" value="ECO:0007669"/>
    <property type="project" value="UniProtKB-KW"/>
</dbReference>
<dbReference type="GO" id="GO:0071555">
    <property type="term" value="P:cell wall organization"/>
    <property type="evidence" value="ECO:0007669"/>
    <property type="project" value="UniProtKB-KW"/>
</dbReference>
<dbReference type="GO" id="GO:0009252">
    <property type="term" value="P:peptidoglycan biosynthetic process"/>
    <property type="evidence" value="ECO:0007669"/>
    <property type="project" value="UniProtKB-UniRule"/>
</dbReference>
<dbReference type="GO" id="GO:0008360">
    <property type="term" value="P:regulation of cell shape"/>
    <property type="evidence" value="ECO:0007669"/>
    <property type="project" value="UniProtKB-KW"/>
</dbReference>
<dbReference type="Gene3D" id="3.40.50.20">
    <property type="match status" value="1"/>
</dbReference>
<dbReference type="Gene3D" id="3.30.1490.20">
    <property type="entry name" value="ATP-grasp fold, A domain"/>
    <property type="match status" value="1"/>
</dbReference>
<dbReference type="Gene3D" id="3.30.470.20">
    <property type="entry name" value="ATP-grasp fold, B domain"/>
    <property type="match status" value="1"/>
</dbReference>
<dbReference type="HAMAP" id="MF_00047">
    <property type="entry name" value="Dala_Dala_lig"/>
    <property type="match status" value="1"/>
</dbReference>
<dbReference type="InterPro" id="IPR011761">
    <property type="entry name" value="ATP-grasp"/>
</dbReference>
<dbReference type="InterPro" id="IPR013815">
    <property type="entry name" value="ATP_grasp_subdomain_1"/>
</dbReference>
<dbReference type="InterPro" id="IPR000291">
    <property type="entry name" value="D-Ala_lig_Van_CS"/>
</dbReference>
<dbReference type="InterPro" id="IPR005905">
    <property type="entry name" value="D_ala_D_ala"/>
</dbReference>
<dbReference type="InterPro" id="IPR011095">
    <property type="entry name" value="Dala_Dala_lig_C"/>
</dbReference>
<dbReference type="InterPro" id="IPR011127">
    <property type="entry name" value="Dala_Dala_lig_N"/>
</dbReference>
<dbReference type="InterPro" id="IPR016185">
    <property type="entry name" value="PreATP-grasp_dom_sf"/>
</dbReference>
<dbReference type="NCBIfam" id="TIGR01205">
    <property type="entry name" value="D_ala_D_alaTIGR"/>
    <property type="match status" value="1"/>
</dbReference>
<dbReference type="NCBIfam" id="NF002527">
    <property type="entry name" value="PRK01966.1-3"/>
    <property type="match status" value="1"/>
</dbReference>
<dbReference type="PANTHER" id="PTHR23132">
    <property type="entry name" value="D-ALANINE--D-ALANINE LIGASE"/>
    <property type="match status" value="1"/>
</dbReference>
<dbReference type="PANTHER" id="PTHR23132:SF23">
    <property type="entry name" value="D-ALANINE--D-ALANINE LIGASE B"/>
    <property type="match status" value="1"/>
</dbReference>
<dbReference type="Pfam" id="PF07478">
    <property type="entry name" value="Dala_Dala_lig_C"/>
    <property type="match status" value="1"/>
</dbReference>
<dbReference type="Pfam" id="PF01820">
    <property type="entry name" value="Dala_Dala_lig_N"/>
    <property type="match status" value="1"/>
</dbReference>
<dbReference type="PIRSF" id="PIRSF039102">
    <property type="entry name" value="Ddl/VanB"/>
    <property type="match status" value="1"/>
</dbReference>
<dbReference type="SUPFAM" id="SSF56059">
    <property type="entry name" value="Glutathione synthetase ATP-binding domain-like"/>
    <property type="match status" value="1"/>
</dbReference>
<dbReference type="SUPFAM" id="SSF52440">
    <property type="entry name" value="PreATP-grasp domain"/>
    <property type="match status" value="1"/>
</dbReference>
<dbReference type="PROSITE" id="PS50975">
    <property type="entry name" value="ATP_GRASP"/>
    <property type="match status" value="1"/>
</dbReference>
<dbReference type="PROSITE" id="PS00843">
    <property type="entry name" value="DALA_DALA_LIGASE_1"/>
    <property type="match status" value="1"/>
</dbReference>
<dbReference type="PROSITE" id="PS00844">
    <property type="entry name" value="DALA_DALA_LIGASE_2"/>
    <property type="match status" value="1"/>
</dbReference>
<name>DDL_PARD8</name>
<feature type="chain" id="PRO_0000341143" description="D-alanine--D-alanine ligase">
    <location>
        <begin position="1"/>
        <end position="330"/>
    </location>
</feature>
<feature type="domain" description="ATP-grasp" evidence="2">
    <location>
        <begin position="121"/>
        <end position="321"/>
    </location>
</feature>
<feature type="binding site" evidence="2">
    <location>
        <begin position="149"/>
        <end position="204"/>
    </location>
    <ligand>
        <name>ATP</name>
        <dbReference type="ChEBI" id="CHEBI:30616"/>
    </ligand>
</feature>
<feature type="binding site" evidence="2">
    <location>
        <position position="275"/>
    </location>
    <ligand>
        <name>Mg(2+)</name>
        <dbReference type="ChEBI" id="CHEBI:18420"/>
        <label>1</label>
    </ligand>
</feature>
<feature type="binding site" evidence="2">
    <location>
        <position position="288"/>
    </location>
    <ligand>
        <name>Mg(2+)</name>
        <dbReference type="ChEBI" id="CHEBI:18420"/>
        <label>1</label>
    </ligand>
</feature>
<feature type="binding site" evidence="2">
    <location>
        <position position="288"/>
    </location>
    <ligand>
        <name>Mg(2+)</name>
        <dbReference type="ChEBI" id="CHEBI:18420"/>
        <label>2</label>
    </ligand>
</feature>
<feature type="binding site" evidence="2">
    <location>
        <position position="290"/>
    </location>
    <ligand>
        <name>Mg(2+)</name>
        <dbReference type="ChEBI" id="CHEBI:18420"/>
        <label>2</label>
    </ligand>
</feature>
<reference key="1">
    <citation type="journal article" date="2007" name="PLoS Biol.">
        <title>Evolution of symbiotic bacteria in the distal human intestine.</title>
        <authorList>
            <person name="Xu J."/>
            <person name="Mahowald M.A."/>
            <person name="Ley R.E."/>
            <person name="Lozupone C.A."/>
            <person name="Hamady M."/>
            <person name="Martens E.C."/>
            <person name="Henrissat B."/>
            <person name="Coutinho P.M."/>
            <person name="Minx P."/>
            <person name="Latreille P."/>
            <person name="Cordum H."/>
            <person name="Van Brunt A."/>
            <person name="Kim K."/>
            <person name="Fulton R.S."/>
            <person name="Fulton L.A."/>
            <person name="Clifton S.W."/>
            <person name="Wilson R.K."/>
            <person name="Knight R.D."/>
            <person name="Gordon J.I."/>
        </authorList>
    </citation>
    <scope>NUCLEOTIDE SEQUENCE [LARGE SCALE GENOMIC DNA]</scope>
    <source>
        <strain>ATCC 8503 / DSM 20701 / CIP 104284 / JCM 5825 / NCTC 11152</strain>
    </source>
</reference>
<accession>A6LFD0</accession>
<evidence type="ECO:0000250" key="1"/>
<evidence type="ECO:0000255" key="2">
    <source>
        <dbReference type="HAMAP-Rule" id="MF_00047"/>
    </source>
</evidence>
<protein>
    <recommendedName>
        <fullName evidence="2">D-alanine--D-alanine ligase</fullName>
        <ecNumber evidence="2">6.3.2.4</ecNumber>
    </recommendedName>
    <alternativeName>
        <fullName evidence="2">D-Ala-D-Ala ligase</fullName>
    </alternativeName>
    <alternativeName>
        <fullName evidence="2">D-alanylalanine synthetase</fullName>
    </alternativeName>
</protein>
<keyword id="KW-0067">ATP-binding</keyword>
<keyword id="KW-0133">Cell shape</keyword>
<keyword id="KW-0961">Cell wall biogenesis/degradation</keyword>
<keyword id="KW-0963">Cytoplasm</keyword>
<keyword id="KW-0436">Ligase</keyword>
<keyword id="KW-0460">Magnesium</keyword>
<keyword id="KW-0464">Manganese</keyword>
<keyword id="KW-0479">Metal-binding</keyword>
<keyword id="KW-0547">Nucleotide-binding</keyword>
<keyword id="KW-0573">Peptidoglycan synthesis</keyword>
<keyword id="KW-1185">Reference proteome</keyword>
<proteinExistence type="inferred from homology"/>
<gene>
    <name evidence="2" type="primary">ddl</name>
    <name type="ordered locus">BDI_2675</name>
</gene>
<comment type="function">
    <text evidence="2">Cell wall formation.</text>
</comment>
<comment type="catalytic activity">
    <reaction evidence="2">
        <text>2 D-alanine + ATP = D-alanyl-D-alanine + ADP + phosphate + H(+)</text>
        <dbReference type="Rhea" id="RHEA:11224"/>
        <dbReference type="ChEBI" id="CHEBI:15378"/>
        <dbReference type="ChEBI" id="CHEBI:30616"/>
        <dbReference type="ChEBI" id="CHEBI:43474"/>
        <dbReference type="ChEBI" id="CHEBI:57416"/>
        <dbReference type="ChEBI" id="CHEBI:57822"/>
        <dbReference type="ChEBI" id="CHEBI:456216"/>
        <dbReference type="EC" id="6.3.2.4"/>
    </reaction>
</comment>
<comment type="cofactor">
    <cofactor evidence="1">
        <name>Mg(2+)</name>
        <dbReference type="ChEBI" id="CHEBI:18420"/>
    </cofactor>
    <cofactor evidence="1">
        <name>Mn(2+)</name>
        <dbReference type="ChEBI" id="CHEBI:29035"/>
    </cofactor>
    <text evidence="1">Binds 2 magnesium or manganese ions per subunit.</text>
</comment>
<comment type="pathway">
    <text evidence="2">Cell wall biogenesis; peptidoglycan biosynthesis.</text>
</comment>
<comment type="subcellular location">
    <subcellularLocation>
        <location evidence="2">Cytoplasm</location>
    </subcellularLocation>
</comment>
<comment type="similarity">
    <text evidence="2">Belongs to the D-alanine--D-alanine ligase family.</text>
</comment>
<sequence length="330" mass="36498">MKKNIAIVAGGDSSEIVISLKSADGIYSFIDKDKYNLYIAIVKRDEWAVILPSGEHTPIDKNDFSFKENGVTRHFDFAYITIHGTPGEDGRLQGYFDMIGMPYSSCGMLVSALTFNKYVCNHYLKDFGVKIAASIHLFKGETITDEEVVTRLGLPIFVKPNDGGSSFGVTKVKEVSAIQPAIAKAFGEGREVILERFIDGTEVTCGCYKVEGKEVVFPLTEVVTNNEFFDFDAKYNGQVDEITPARISTELTELIQCETSRIYDILGAKGLIRVDYIIPADGEPVLLEINTTPGMTATSFIPQQVRAAGLDIKDVMTDIIEDELKNRKTK</sequence>
<organism>
    <name type="scientific">Parabacteroides distasonis (strain ATCC 8503 / DSM 20701 / CIP 104284 / JCM 5825 / NCTC 11152)</name>
    <dbReference type="NCBI Taxonomy" id="435591"/>
    <lineage>
        <taxon>Bacteria</taxon>
        <taxon>Pseudomonadati</taxon>
        <taxon>Bacteroidota</taxon>
        <taxon>Bacteroidia</taxon>
        <taxon>Bacteroidales</taxon>
        <taxon>Tannerellaceae</taxon>
        <taxon>Parabacteroides</taxon>
    </lineage>
</organism>